<feature type="chain" id="PRO_0000427240" description="Uncharacterized protein MT2268">
    <location>
        <begin position="1"/>
        <end position="378"/>
    </location>
</feature>
<feature type="domain" description="Guanylate cyclase" evidence="1">
    <location>
        <begin position="208"/>
        <end position="317"/>
    </location>
</feature>
<name>Y2212_MYCTO</name>
<sequence>MYDSLDFDALEAAGIANPRERAGLLTYLDELGFTVEEMVQAERRGRLFGLAGDVLLWSGPPIYTLATAADELGLSADDVARAWSLLGLTVAGPDVPTLSQADVDALATWVALKALVGEDGAFGLLRVLGTAMARLAEAESTMIRAGSPNIQMTHTHDELATARAYRAAAEFVPRIGALIDTVHRHHLASARTYFEGVIGDTSASVTCGIGFADLSSFTALTQALTPAQLQDLLTEFDAAVTDVVHADGGRLVKFIGDAVMWVSSSPERLVRAAVDLVDHPGARAAELQVRAGLAYGTVLALNGDYFGNPVNLAARLVAAAAPGQILAAAQLRDMLPDWPALAHGPLTLKGFDAPVMAFELHDNPRARDADTPSPAASD</sequence>
<protein>
    <recommendedName>
        <fullName>Uncharacterized protein MT2268</fullName>
    </recommendedName>
</protein>
<proteinExistence type="inferred from homology"/>
<comment type="similarity">
    <text evidence="1">Belongs to the adenylyl cyclase class-4/guanylyl cyclase family.</text>
</comment>
<comment type="sequence caution" evidence="2">
    <conflict type="erroneous initiation">
        <sequence resource="EMBL-CDS" id="AAK46554"/>
    </conflict>
</comment>
<organism>
    <name type="scientific">Mycobacterium tuberculosis (strain CDC 1551 / Oshkosh)</name>
    <dbReference type="NCBI Taxonomy" id="83331"/>
    <lineage>
        <taxon>Bacteria</taxon>
        <taxon>Bacillati</taxon>
        <taxon>Actinomycetota</taxon>
        <taxon>Actinomycetes</taxon>
        <taxon>Mycobacteriales</taxon>
        <taxon>Mycobacteriaceae</taxon>
        <taxon>Mycobacterium</taxon>
        <taxon>Mycobacterium tuberculosis complex</taxon>
    </lineage>
</organism>
<keyword id="KW-1185">Reference proteome</keyword>
<evidence type="ECO:0000255" key="1">
    <source>
        <dbReference type="PROSITE-ProRule" id="PRU00099"/>
    </source>
</evidence>
<evidence type="ECO:0000305" key="2"/>
<accession>P9WMU6</accession>
<accession>L0T8Y3</accession>
<accession>P64265</accession>
<accession>Q10400</accession>
<reference key="1">
    <citation type="journal article" date="2002" name="J. Bacteriol.">
        <title>Whole-genome comparison of Mycobacterium tuberculosis clinical and laboratory strains.</title>
        <authorList>
            <person name="Fleischmann R.D."/>
            <person name="Alland D."/>
            <person name="Eisen J.A."/>
            <person name="Carpenter L."/>
            <person name="White O."/>
            <person name="Peterson J.D."/>
            <person name="DeBoy R.T."/>
            <person name="Dodson R.J."/>
            <person name="Gwinn M.L."/>
            <person name="Haft D.H."/>
            <person name="Hickey E.K."/>
            <person name="Kolonay J.F."/>
            <person name="Nelson W.C."/>
            <person name="Umayam L.A."/>
            <person name="Ermolaeva M.D."/>
            <person name="Salzberg S.L."/>
            <person name="Delcher A."/>
            <person name="Utterback T.R."/>
            <person name="Weidman J.F."/>
            <person name="Khouri H.M."/>
            <person name="Gill J."/>
            <person name="Mikula A."/>
            <person name="Bishai W."/>
            <person name="Jacobs W.R. Jr."/>
            <person name="Venter J.C."/>
            <person name="Fraser C.M."/>
        </authorList>
    </citation>
    <scope>NUCLEOTIDE SEQUENCE [LARGE SCALE GENOMIC DNA]</scope>
    <source>
        <strain>CDC 1551 / Oshkosh</strain>
    </source>
</reference>
<gene>
    <name type="ordered locus">MT2268</name>
</gene>
<dbReference type="EMBL" id="AE000516">
    <property type="protein sequence ID" value="AAK46554.1"/>
    <property type="status" value="ALT_INIT"/>
    <property type="molecule type" value="Genomic_DNA"/>
</dbReference>
<dbReference type="PIR" id="E70786">
    <property type="entry name" value="E70786"/>
</dbReference>
<dbReference type="RefSeq" id="WP_003411442.1">
    <property type="nucleotide sequence ID" value="NZ_KK341227.1"/>
</dbReference>
<dbReference type="SMR" id="P9WMU6"/>
<dbReference type="KEGG" id="mtc:MT2268"/>
<dbReference type="PATRIC" id="fig|83331.31.peg.2443"/>
<dbReference type="HOGENOM" id="CLU_043761_2_0_11"/>
<dbReference type="Proteomes" id="UP000001020">
    <property type="component" value="Chromosome"/>
</dbReference>
<dbReference type="GO" id="GO:0004016">
    <property type="term" value="F:adenylate cyclase activity"/>
    <property type="evidence" value="ECO:0007669"/>
    <property type="project" value="UniProtKB-ARBA"/>
</dbReference>
<dbReference type="GO" id="GO:0009190">
    <property type="term" value="P:cyclic nucleotide biosynthetic process"/>
    <property type="evidence" value="ECO:0007669"/>
    <property type="project" value="InterPro"/>
</dbReference>
<dbReference type="GO" id="GO:0035556">
    <property type="term" value="P:intracellular signal transduction"/>
    <property type="evidence" value="ECO:0007669"/>
    <property type="project" value="InterPro"/>
</dbReference>
<dbReference type="CDD" id="cd07302">
    <property type="entry name" value="CHD"/>
    <property type="match status" value="1"/>
</dbReference>
<dbReference type="Gene3D" id="3.30.70.1230">
    <property type="entry name" value="Nucleotide cyclase"/>
    <property type="match status" value="1"/>
</dbReference>
<dbReference type="InterPro" id="IPR001054">
    <property type="entry name" value="A/G_cyclase"/>
</dbReference>
<dbReference type="InterPro" id="IPR050697">
    <property type="entry name" value="Adenylyl/Guanylyl_Cyclase_3/4"/>
</dbReference>
<dbReference type="InterPro" id="IPR029787">
    <property type="entry name" value="Nucleotide_cyclase"/>
</dbReference>
<dbReference type="PANTHER" id="PTHR43081:SF1">
    <property type="entry name" value="ADENYLATE CYCLASE, TERMINAL-DIFFERENTIATION SPECIFIC"/>
    <property type="match status" value="1"/>
</dbReference>
<dbReference type="PANTHER" id="PTHR43081">
    <property type="entry name" value="ADENYLATE CYCLASE, TERMINAL-DIFFERENTIATION SPECIFIC-RELATED"/>
    <property type="match status" value="1"/>
</dbReference>
<dbReference type="Pfam" id="PF00211">
    <property type="entry name" value="Guanylate_cyc"/>
    <property type="match status" value="1"/>
</dbReference>
<dbReference type="SMART" id="SM00044">
    <property type="entry name" value="CYCc"/>
    <property type="match status" value="1"/>
</dbReference>
<dbReference type="SUPFAM" id="SSF55073">
    <property type="entry name" value="Nucleotide cyclase"/>
    <property type="match status" value="1"/>
</dbReference>
<dbReference type="PROSITE" id="PS50125">
    <property type="entry name" value="GUANYLATE_CYCLASE_2"/>
    <property type="match status" value="1"/>
</dbReference>